<proteinExistence type="evidence at protein level"/>
<gene>
    <name evidence="8" type="primary">cki-1</name>
    <name evidence="8" type="ORF">T05A6.1</name>
</gene>
<organism>
    <name type="scientific">Caenorhabditis elegans</name>
    <dbReference type="NCBI Taxonomy" id="6239"/>
    <lineage>
        <taxon>Eukaryota</taxon>
        <taxon>Metazoa</taxon>
        <taxon>Ecdysozoa</taxon>
        <taxon>Nematoda</taxon>
        <taxon>Chromadorea</taxon>
        <taxon>Rhabditida</taxon>
        <taxon>Rhabditina</taxon>
        <taxon>Rhabditomorpha</taxon>
        <taxon>Rhabditoidea</taxon>
        <taxon>Rhabditidae</taxon>
        <taxon>Peloderinae</taxon>
        <taxon>Caenorhabditis</taxon>
    </lineage>
</organism>
<evidence type="ECO:0000256" key="1">
    <source>
        <dbReference type="SAM" id="MobiDB-lite"/>
    </source>
</evidence>
<evidence type="ECO:0000269" key="2">
    <source>
    </source>
</evidence>
<evidence type="ECO:0000269" key="3">
    <source>
    </source>
</evidence>
<evidence type="ECO:0000269" key="4">
    <source>
    </source>
</evidence>
<evidence type="ECO:0000269" key="5">
    <source>
    </source>
</evidence>
<evidence type="ECO:0000269" key="6">
    <source>
    </source>
</evidence>
<evidence type="ECO:0000305" key="7"/>
<evidence type="ECO:0000312" key="8">
    <source>
        <dbReference type="WormBase" id="T05A6.1"/>
    </source>
</evidence>
<comment type="function">
    <text evidence="2 4 5 6">Negative cell-cycle regulator that functions at the G1-to-S-phase transition (PubMed:10587644, PubMed:9716524). Required for suspension of the cell cycle in dauer larvae and starved L1 larvae (PubMed:10587644, PubMed:9716524). In vulval precursor cells (VPCs), a pathway of heterochronic genes acts via cki-1 to maintain VPCs in G1 during the L2 larval stage (PubMed:10587644, PubMed:15247923, PubMed:9716524). Cul-2 may function in ubiquitin-mediated degradation by targeting cki-1 for degradation (PubMed:10587644). Involved in distal tip cell development by repressing and modulating cye-1/cdk-2 activity levels in Z1.aa/Z4.pp and in Z1.ap/Z4.pa (PubMed:17476329).</text>
</comment>
<comment type="subunit">
    <text evidence="3">Interacts with cyd-1 (Probable); the interaction is direct.</text>
</comment>
<comment type="subcellular location">
    <subcellularLocation>
        <location evidence="2 4">Nucleus</location>
    </subcellularLocation>
</comment>
<comment type="tissue specificity">
    <text evidence="2 6">In embryos, expression is first seen in pharyngeal primordium and later in all differentiating cells. Post embryonic expression corresponds to developmental patterns of cell cycle progression in many tissues including sex myoblasts, distal tip cells, vulval cells, seam cells, neurons, intestine cells and hypodermal cells.</text>
</comment>
<comment type="developmental stage">
    <text evidence="2 5 6">In embryos, expression is first seen in pharyngeal primordium and later in all differentiating cells. Post embryonic expression corresponds to developmental patterns of cell cycle progression in many tissues including sex myoblasts, distal tip cells, vulval cells, seam cells, neurons, intestine cells and hypodermal cells (PubMed:10587644, PubMed:9716524). During the development of distal tip cells (DTC), expressed asymmetrically between the daughters of the Z1.a and Z4.p cells; asymmetric expression is regulated by wrm-1, a component of the Wnt/MAPK pathway (PubMed:17476329).</text>
</comment>
<comment type="disruption phenotype">
    <text evidence="3 4">RNAi-mediated knockdown results in additional cell divisions in postembryonic intestinal cells characterized by a premature entry into S phase.</text>
</comment>
<comment type="similarity">
    <text evidence="7">Belongs to the CDI family.</text>
</comment>
<reference evidence="7" key="1">
    <citation type="journal article" date="1999" name="Nat. Cell Biol.">
        <title>CUL-2 is required for the G1-to-S-phase transition and mitotic chromosome condensation in Caenorhabditis elegans.</title>
        <authorList>
            <person name="Feng H."/>
            <person name="Zhong W."/>
            <person name="Punkosdy G."/>
            <person name="Gu S."/>
            <person name="Zhou L."/>
            <person name="Seabolt E.K."/>
            <person name="Kipreos E.T."/>
        </authorList>
    </citation>
    <scope>NUCLEOTIDE SEQUENCE [MRNA]</scope>
    <scope>FUNCTION</scope>
    <scope>SUBCELLULAR LOCATION</scope>
    <scope>TISSUE SPECIFICITY</scope>
    <source>
        <strain evidence="2">Bristol N2</strain>
    </source>
</reference>
<reference key="2">
    <citation type="journal article" date="1998" name="Science">
        <title>Genome sequence of the nematode C. elegans: a platform for investigating biology.</title>
        <authorList>
            <consortium name="The C. elegans sequencing consortium"/>
        </authorList>
    </citation>
    <scope>NUCLEOTIDE SEQUENCE [LARGE SCALE GENOMIC DNA]</scope>
    <source>
        <strain>Bristol N2</strain>
    </source>
</reference>
<reference evidence="7" key="3">
    <citation type="journal article" date="1998" name="Development">
        <title>Developmental regulation of a cyclin-dependent kinase inhibitor controls postembryonic cell cycle progression in Caenorhabditis elegans.</title>
        <authorList>
            <person name="Hong Y."/>
            <person name="Roy R."/>
            <person name="Ambros V."/>
        </authorList>
    </citation>
    <scope>FUNCTION</scope>
    <scope>TISSUE SPECIFICITY</scope>
</reference>
<reference key="4">
    <citation type="journal article" date="2001" name="Development">
        <title>lin-35 Rb and cki-1 Cip/Kip cooperate in developmental regulation of G1 progression in C. elegans.</title>
        <authorList>
            <person name="Boxem M."/>
            <person name="van den Heuvel S."/>
        </authorList>
    </citation>
    <scope>INTERACTION WITH CYD-1</scope>
    <scope>DISRUPTION PHENOTYPE</scope>
</reference>
<reference key="5">
    <citation type="journal article" date="2004" name="Nat. Cell Biol.">
        <title>The CDC-14 phosphatase controls developmental cell-cycle arrest in C. elegans.</title>
        <authorList>
            <person name="Saito R.M."/>
            <person name="Perreault A."/>
            <person name="Peach B."/>
            <person name="Satterlee J.S."/>
            <person name="van den Heuvel S."/>
        </authorList>
    </citation>
    <scope>FUNCTION</scope>
    <scope>SUBCELLULAR LOCATION</scope>
    <scope>DISRUPTION PHENOTYPE</scope>
</reference>
<reference key="6">
    <citation type="journal article" date="2007" name="PLoS ONE">
        <title>Cyclin E and CDK2 repress the terminal differentiation of quiescent cells after asymmetric division in C. elegans.</title>
        <authorList>
            <person name="Fujita M."/>
            <person name="Takeshita H."/>
            <person name="Sawa H."/>
        </authorList>
    </citation>
    <scope>FUNCTION</scope>
    <scope>DEVELOPMENTAL STAGE</scope>
</reference>
<keyword id="KW-0131">Cell cycle</keyword>
<keyword id="KW-0539">Nucleus</keyword>
<keyword id="KW-0649">Protein kinase inhibitor</keyword>
<keyword id="KW-1185">Reference proteome</keyword>
<keyword id="KW-0833">Ubl conjugation pathway</keyword>
<sequence length="184" mass="21245">MSSARRCLFGRPTPEQRSRTRIWLEDAVKRMRQEESQKWGFDFELETPLPSSAGFVYEVIPENCVPEFYRTKVLTVRTTCSSLDISSTTLTPLSSPSTSDKEEPSLMDPNSSFEDEEEPKKWQFREPPTPRKTPTKRQQKMTDFMAVSRKKNSLSPNKLSPVNVIFTPKSRRPTIRTRSSCSPY</sequence>
<accession>Q22197</accession>
<name>CKI1_CAEEL</name>
<protein>
    <recommendedName>
        <fullName>Cyclin-dependent kinase inhibitor 1</fullName>
    </recommendedName>
</protein>
<dbReference type="EMBL" id="AF179358">
    <property type="protein sequence ID" value="AAF13868.1"/>
    <property type="molecule type" value="mRNA"/>
</dbReference>
<dbReference type="EMBL" id="BX284602">
    <property type="protein sequence ID" value="CAA90667.1"/>
    <property type="molecule type" value="Genomic_DNA"/>
</dbReference>
<dbReference type="PIR" id="T24496">
    <property type="entry name" value="T24496"/>
</dbReference>
<dbReference type="RefSeq" id="NP_495641.1">
    <property type="nucleotide sequence ID" value="NM_063240.5"/>
</dbReference>
<dbReference type="SMR" id="Q22197"/>
<dbReference type="BioGRID" id="39593">
    <property type="interactions" value="7"/>
</dbReference>
<dbReference type="FunCoup" id="Q22197">
    <property type="interactions" value="693"/>
</dbReference>
<dbReference type="STRING" id="6239.T05A6.1.1"/>
<dbReference type="PaxDb" id="6239-T05A6.1"/>
<dbReference type="EnsemblMetazoa" id="T05A6.1.1">
    <property type="protein sequence ID" value="T05A6.1.1"/>
    <property type="gene ID" value="WBGene00000516"/>
</dbReference>
<dbReference type="GeneID" id="174260"/>
<dbReference type="KEGG" id="cel:CELE_T05A6.1"/>
<dbReference type="UCSC" id="T05A6.1">
    <property type="organism name" value="c. elegans"/>
</dbReference>
<dbReference type="AGR" id="WB:WBGene00000516"/>
<dbReference type="CTD" id="174260"/>
<dbReference type="WormBase" id="T05A6.1">
    <property type="protein sequence ID" value="CE03628"/>
    <property type="gene ID" value="WBGene00000516"/>
    <property type="gene designation" value="cki-1"/>
</dbReference>
<dbReference type="eggNOG" id="KOG4743">
    <property type="taxonomic scope" value="Eukaryota"/>
</dbReference>
<dbReference type="HOGENOM" id="CLU_1483285_0_0_1"/>
<dbReference type="InParanoid" id="Q22197"/>
<dbReference type="OMA" id="FREPPTP"/>
<dbReference type="OrthoDB" id="6373236at2759"/>
<dbReference type="PRO" id="PR:Q22197"/>
<dbReference type="Proteomes" id="UP000001940">
    <property type="component" value="Chromosome II"/>
</dbReference>
<dbReference type="Bgee" id="WBGene00000516">
    <property type="expression patterns" value="Expressed in pharyngeal muscle cell (C elegans) and 3 other cell types or tissues"/>
</dbReference>
<dbReference type="GO" id="GO:0005634">
    <property type="term" value="C:nucleus"/>
    <property type="evidence" value="ECO:0000314"/>
    <property type="project" value="WormBase"/>
</dbReference>
<dbReference type="GO" id="GO:0004861">
    <property type="term" value="F:cyclin-dependent protein serine/threonine kinase inhibitor activity"/>
    <property type="evidence" value="ECO:0007669"/>
    <property type="project" value="InterPro"/>
</dbReference>
<dbReference type="GO" id="GO:0008406">
    <property type="term" value="P:gonad development"/>
    <property type="evidence" value="ECO:0000316"/>
    <property type="project" value="UniProtKB"/>
</dbReference>
<dbReference type="GO" id="GO:2000134">
    <property type="term" value="P:negative regulation of G1/S transition of mitotic cell cycle"/>
    <property type="evidence" value="ECO:0000315"/>
    <property type="project" value="UniProtKB"/>
</dbReference>
<dbReference type="GO" id="GO:0045930">
    <property type="term" value="P:negative regulation of mitotic cell cycle"/>
    <property type="evidence" value="ECO:0000318"/>
    <property type="project" value="GO_Central"/>
</dbReference>
<dbReference type="GO" id="GO:1903452">
    <property type="term" value="P:positive regulation of G1 to G0 transition"/>
    <property type="evidence" value="ECO:0000315"/>
    <property type="project" value="WormBase"/>
</dbReference>
<dbReference type="GO" id="GO:1902806">
    <property type="term" value="P:regulation of cell cycle G1/S phase transition"/>
    <property type="evidence" value="ECO:0000316"/>
    <property type="project" value="UniProtKB"/>
</dbReference>
<dbReference type="GO" id="GO:0045595">
    <property type="term" value="P:regulation of cell differentiation"/>
    <property type="evidence" value="ECO:0000315"/>
    <property type="project" value="WormBase"/>
</dbReference>
<dbReference type="GO" id="GO:0051302">
    <property type="term" value="P:regulation of cell division"/>
    <property type="evidence" value="ECO:0000316"/>
    <property type="project" value="UniProtKB"/>
</dbReference>
<dbReference type="GO" id="GO:0032875">
    <property type="term" value="P:regulation of DNA endoreduplication"/>
    <property type="evidence" value="ECO:0000316"/>
    <property type="project" value="UniProtKB"/>
</dbReference>
<dbReference type="Gene3D" id="4.10.365.10">
    <property type="entry name" value="p27"/>
    <property type="match status" value="1"/>
</dbReference>
<dbReference type="InterPro" id="IPR003175">
    <property type="entry name" value="CDI_dom"/>
</dbReference>
<dbReference type="InterPro" id="IPR044898">
    <property type="entry name" value="CDI_dom_sf"/>
</dbReference>
<dbReference type="PANTHER" id="PTHR10265">
    <property type="entry name" value="CYCLIN-DEPENDENT KINASE INHIBITOR 1"/>
    <property type="match status" value="1"/>
</dbReference>
<dbReference type="PANTHER" id="PTHR10265:SF46">
    <property type="entry name" value="CYCLIN-DEPENDENT KINASE INHIBITOR 1"/>
    <property type="match status" value="1"/>
</dbReference>
<dbReference type="Pfam" id="PF02234">
    <property type="entry name" value="CDI"/>
    <property type="match status" value="1"/>
</dbReference>
<feature type="chain" id="PRO_0000190089" description="Cyclin-dependent kinase inhibitor 1">
    <location>
        <begin position="1"/>
        <end position="184"/>
    </location>
</feature>
<feature type="region of interest" description="Disordered" evidence="1">
    <location>
        <begin position="85"/>
        <end position="184"/>
    </location>
</feature>
<feature type="compositionally biased region" description="Low complexity" evidence="1">
    <location>
        <begin position="85"/>
        <end position="98"/>
    </location>
</feature>